<reference key="1">
    <citation type="journal article" date="2008" name="PLoS ONE">
        <title>Comparative analysis of Acinetobacters: three genomes for three lifestyles.</title>
        <authorList>
            <person name="Vallenet D."/>
            <person name="Nordmann P."/>
            <person name="Barbe V."/>
            <person name="Poirel L."/>
            <person name="Mangenot S."/>
            <person name="Bataille E."/>
            <person name="Dossat C."/>
            <person name="Gas S."/>
            <person name="Kreimeyer A."/>
            <person name="Lenoble P."/>
            <person name="Oztas S."/>
            <person name="Poulain J."/>
            <person name="Segurens B."/>
            <person name="Robert C."/>
            <person name="Abergel C."/>
            <person name="Claverie J.-M."/>
            <person name="Raoult D."/>
            <person name="Medigue C."/>
            <person name="Weissenbach J."/>
            <person name="Cruveiller S."/>
        </authorList>
    </citation>
    <scope>NUCLEOTIDE SEQUENCE [LARGE SCALE GENOMIC DNA]</scope>
    <source>
        <strain>SDF</strain>
    </source>
</reference>
<accession>B0VUD5</accession>
<sequence>MVELPFQQSQALNVRQNRALALAGVFQATQLTHMTAMTGQQSIGESGNFYFELLIKASLNIRPTTNNNAVQTLDFFNQLADISLGLKTLENCITQPFTNAPKSRLPKMRSAKLPMSYAMSLLQLEKKVYSNPEYVAIIEKAQQKILKQLSFFDNNYLHPSILANLAQTYVDTAGQINPRILVRGNAEAFKDTNHTNRIRACLFTGLQMAHLWRQLGGSSWNMIFSKRKLLQDIQALARLQYQVI</sequence>
<protein>
    <recommendedName>
        <fullName evidence="1">High frequency lysogenization protein HflD homolog</fullName>
    </recommendedName>
</protein>
<evidence type="ECO:0000255" key="1">
    <source>
        <dbReference type="HAMAP-Rule" id="MF_00695"/>
    </source>
</evidence>
<gene>
    <name evidence="1" type="primary">hflD</name>
    <name type="ordered locus">ABSDF1123</name>
</gene>
<comment type="subcellular location">
    <subcellularLocation>
        <location>Cytoplasm</location>
    </subcellularLocation>
    <subcellularLocation>
        <location evidence="1">Cell inner membrane</location>
        <topology evidence="1">Peripheral membrane protein</topology>
        <orientation evidence="1">Cytoplasmic side</orientation>
    </subcellularLocation>
</comment>
<comment type="similarity">
    <text evidence="1">Belongs to the HflD family.</text>
</comment>
<organism>
    <name type="scientific">Acinetobacter baumannii (strain SDF)</name>
    <dbReference type="NCBI Taxonomy" id="509170"/>
    <lineage>
        <taxon>Bacteria</taxon>
        <taxon>Pseudomonadati</taxon>
        <taxon>Pseudomonadota</taxon>
        <taxon>Gammaproteobacteria</taxon>
        <taxon>Moraxellales</taxon>
        <taxon>Moraxellaceae</taxon>
        <taxon>Acinetobacter</taxon>
        <taxon>Acinetobacter calcoaceticus/baumannii complex</taxon>
    </lineage>
</organism>
<keyword id="KW-0997">Cell inner membrane</keyword>
<keyword id="KW-1003">Cell membrane</keyword>
<keyword id="KW-0963">Cytoplasm</keyword>
<keyword id="KW-0472">Membrane</keyword>
<name>HFLD_ACIBS</name>
<feature type="chain" id="PRO_0000390632" description="High frequency lysogenization protein HflD homolog">
    <location>
        <begin position="1"/>
        <end position="244"/>
    </location>
</feature>
<dbReference type="EMBL" id="CU468230">
    <property type="protein sequence ID" value="CAP00473.1"/>
    <property type="molecule type" value="Genomic_DNA"/>
</dbReference>
<dbReference type="SMR" id="B0VUD5"/>
<dbReference type="KEGG" id="abm:ABSDF1123"/>
<dbReference type="HOGENOM" id="CLU_098920_0_0_6"/>
<dbReference type="Proteomes" id="UP000001741">
    <property type="component" value="Chromosome"/>
</dbReference>
<dbReference type="GO" id="GO:0005737">
    <property type="term" value="C:cytoplasm"/>
    <property type="evidence" value="ECO:0007669"/>
    <property type="project" value="UniProtKB-SubCell"/>
</dbReference>
<dbReference type="GO" id="GO:0005886">
    <property type="term" value="C:plasma membrane"/>
    <property type="evidence" value="ECO:0007669"/>
    <property type="project" value="UniProtKB-SubCell"/>
</dbReference>
<dbReference type="Gene3D" id="1.10.3890.10">
    <property type="entry name" value="HflD-like"/>
    <property type="match status" value="1"/>
</dbReference>
<dbReference type="HAMAP" id="MF_00695">
    <property type="entry name" value="HflD_protein"/>
    <property type="match status" value="1"/>
</dbReference>
<dbReference type="InterPro" id="IPR007451">
    <property type="entry name" value="HflD"/>
</dbReference>
<dbReference type="InterPro" id="IPR035932">
    <property type="entry name" value="HflD-like_sf"/>
</dbReference>
<dbReference type="NCBIfam" id="NF001250">
    <property type="entry name" value="PRK00218.1-6"/>
    <property type="match status" value="1"/>
</dbReference>
<dbReference type="PANTHER" id="PTHR38100">
    <property type="entry name" value="HIGH FREQUENCY LYSOGENIZATION PROTEIN HFLD"/>
    <property type="match status" value="1"/>
</dbReference>
<dbReference type="PANTHER" id="PTHR38100:SF1">
    <property type="entry name" value="HIGH FREQUENCY LYSOGENIZATION PROTEIN HFLD"/>
    <property type="match status" value="1"/>
</dbReference>
<dbReference type="Pfam" id="PF04356">
    <property type="entry name" value="DUF489"/>
    <property type="match status" value="1"/>
</dbReference>
<dbReference type="SUPFAM" id="SSF101322">
    <property type="entry name" value="YcfC-like"/>
    <property type="match status" value="1"/>
</dbReference>
<proteinExistence type="inferred from homology"/>